<evidence type="ECO:0000255" key="1">
    <source>
        <dbReference type="HAMAP-Rule" id="MF_01358"/>
    </source>
</evidence>
<organism>
    <name type="scientific">Francisella philomiragia subsp. philomiragia (strain ATCC 25017 / CCUG 19701 / FSC 153 / O#319-036)</name>
    <dbReference type="NCBI Taxonomy" id="484022"/>
    <lineage>
        <taxon>Bacteria</taxon>
        <taxon>Pseudomonadati</taxon>
        <taxon>Pseudomonadota</taxon>
        <taxon>Gammaproteobacteria</taxon>
        <taxon>Thiotrichales</taxon>
        <taxon>Francisellaceae</taxon>
        <taxon>Francisella</taxon>
    </lineage>
</organism>
<protein>
    <recommendedName>
        <fullName evidence="1">NADH-quinone oxidoreductase subunit D</fullName>
        <ecNumber evidence="1">7.1.1.-</ecNumber>
    </recommendedName>
    <alternativeName>
        <fullName evidence="1">NADH dehydrogenase I subunit D</fullName>
    </alternativeName>
    <alternativeName>
        <fullName evidence="1">NDH-1 subunit D</fullName>
    </alternativeName>
</protein>
<gene>
    <name evidence="1" type="primary">nuoD</name>
    <name type="ordered locus">Fphi_0932</name>
</gene>
<feature type="chain" id="PRO_0000371864" description="NADH-quinone oxidoreductase subunit D">
    <location>
        <begin position="1"/>
        <end position="417"/>
    </location>
</feature>
<proteinExistence type="inferred from homology"/>
<name>NUOD_FRAP2</name>
<comment type="function">
    <text evidence="1">NDH-1 shuttles electrons from NADH, via FMN and iron-sulfur (Fe-S) centers, to quinones in the respiratory chain. The immediate electron acceptor for the enzyme in this species is believed to be ubiquinone. Couples the redox reaction to proton translocation (for every two electrons transferred, four hydrogen ions are translocated across the cytoplasmic membrane), and thus conserves the redox energy in a proton gradient.</text>
</comment>
<comment type="catalytic activity">
    <reaction evidence="1">
        <text>a quinone + NADH + 5 H(+)(in) = a quinol + NAD(+) + 4 H(+)(out)</text>
        <dbReference type="Rhea" id="RHEA:57888"/>
        <dbReference type="ChEBI" id="CHEBI:15378"/>
        <dbReference type="ChEBI" id="CHEBI:24646"/>
        <dbReference type="ChEBI" id="CHEBI:57540"/>
        <dbReference type="ChEBI" id="CHEBI:57945"/>
        <dbReference type="ChEBI" id="CHEBI:132124"/>
    </reaction>
</comment>
<comment type="subunit">
    <text evidence="1">NDH-1 is composed of 14 different subunits. Subunits NuoB, C, D, E, F, and G constitute the peripheral sector of the complex.</text>
</comment>
<comment type="subcellular location">
    <subcellularLocation>
        <location evidence="1">Cell inner membrane</location>
        <topology evidence="1">Peripheral membrane protein</topology>
        <orientation evidence="1">Cytoplasmic side</orientation>
    </subcellularLocation>
</comment>
<comment type="similarity">
    <text evidence="1">Belongs to the complex I 49 kDa subunit family.</text>
</comment>
<dbReference type="EC" id="7.1.1.-" evidence="1"/>
<dbReference type="EMBL" id="CP000937">
    <property type="protein sequence ID" value="ABZ87155.1"/>
    <property type="molecule type" value="Genomic_DNA"/>
</dbReference>
<dbReference type="SMR" id="B0TWP7"/>
<dbReference type="KEGG" id="fph:Fphi_0932"/>
<dbReference type="eggNOG" id="COG0649">
    <property type="taxonomic scope" value="Bacteria"/>
</dbReference>
<dbReference type="HOGENOM" id="CLU_015134_1_1_6"/>
<dbReference type="GO" id="GO:0005886">
    <property type="term" value="C:plasma membrane"/>
    <property type="evidence" value="ECO:0007669"/>
    <property type="project" value="UniProtKB-SubCell"/>
</dbReference>
<dbReference type="GO" id="GO:0051287">
    <property type="term" value="F:NAD binding"/>
    <property type="evidence" value="ECO:0007669"/>
    <property type="project" value="InterPro"/>
</dbReference>
<dbReference type="GO" id="GO:0050136">
    <property type="term" value="F:NADH:ubiquinone reductase (non-electrogenic) activity"/>
    <property type="evidence" value="ECO:0007669"/>
    <property type="project" value="UniProtKB-UniRule"/>
</dbReference>
<dbReference type="GO" id="GO:0048038">
    <property type="term" value="F:quinone binding"/>
    <property type="evidence" value="ECO:0007669"/>
    <property type="project" value="UniProtKB-KW"/>
</dbReference>
<dbReference type="FunFam" id="1.10.645.10:FF:000005">
    <property type="entry name" value="NADH-quinone oxidoreductase subunit D"/>
    <property type="match status" value="1"/>
</dbReference>
<dbReference type="Gene3D" id="1.10.645.10">
    <property type="entry name" value="Cytochrome-c3 Hydrogenase, chain B"/>
    <property type="match status" value="1"/>
</dbReference>
<dbReference type="HAMAP" id="MF_01358">
    <property type="entry name" value="NDH1_NuoD"/>
    <property type="match status" value="1"/>
</dbReference>
<dbReference type="InterPro" id="IPR001135">
    <property type="entry name" value="NADH_Q_OxRdtase_suD"/>
</dbReference>
<dbReference type="InterPro" id="IPR014029">
    <property type="entry name" value="NADH_UbQ_OxRdtase_49kDa_CS"/>
</dbReference>
<dbReference type="InterPro" id="IPR022885">
    <property type="entry name" value="NDH1_su_D/H"/>
</dbReference>
<dbReference type="InterPro" id="IPR029014">
    <property type="entry name" value="NiFe-Hase_large"/>
</dbReference>
<dbReference type="NCBIfam" id="TIGR01962">
    <property type="entry name" value="NuoD"/>
    <property type="match status" value="1"/>
</dbReference>
<dbReference type="NCBIfam" id="NF004739">
    <property type="entry name" value="PRK06075.1"/>
    <property type="match status" value="1"/>
</dbReference>
<dbReference type="PANTHER" id="PTHR11993:SF10">
    <property type="entry name" value="NADH DEHYDROGENASE [UBIQUINONE] IRON-SULFUR PROTEIN 2, MITOCHONDRIAL"/>
    <property type="match status" value="1"/>
</dbReference>
<dbReference type="PANTHER" id="PTHR11993">
    <property type="entry name" value="NADH-UBIQUINONE OXIDOREDUCTASE 49 KDA SUBUNIT"/>
    <property type="match status" value="1"/>
</dbReference>
<dbReference type="Pfam" id="PF00346">
    <property type="entry name" value="Complex1_49kDa"/>
    <property type="match status" value="1"/>
</dbReference>
<dbReference type="SUPFAM" id="SSF56762">
    <property type="entry name" value="HydB/Nqo4-like"/>
    <property type="match status" value="1"/>
</dbReference>
<dbReference type="PROSITE" id="PS00535">
    <property type="entry name" value="COMPLEX1_49K"/>
    <property type="match status" value="1"/>
</dbReference>
<sequence>MAEYKNYTLNFGPVHPAAHGVLRLILELDGETVVRADPHVGLLHRGTEKLAEFKPYNQSIGYMDRLDYVSMMCNEHAYVMAIEKLLELEVPERAQYIRVMFAEMTRILNHLLWVAACGIDLGAMTVFLYAFRVREDLFDCYEAVSGARMHAAYFRPGGVARDLPTQMPQYKQTRFTSKRKTKKINANRQGSMLDFLDSFVVDFDKSLDEIDTLLTDNRLWKQRTVDIGVVTAERAVELGFTGPMLRGSGVAWDLRKSQPYEVYDKLDFDIPVGANGDCYDRYLVRMAEMRESNKLIKQCVDWLRANQGPVLSDNHKVAPPKRNAMKNNMEELIHHFKLFSEGYCTPEGEVYVGTEHPKGEFGVYIKSDGANKPYRLKMKAPGFTHISAMDELLSGHMLADTPAIISTIDVVFGDVDR</sequence>
<reference key="1">
    <citation type="submission" date="2007-12" db="EMBL/GenBank/DDBJ databases">
        <title>Complete sequence of chromosome of Francisella philomiragia subsp. philomiragia ATCC 25017.</title>
        <authorList>
            <consortium name="US DOE Joint Genome Institute"/>
            <person name="Copeland A."/>
            <person name="Lucas S."/>
            <person name="Lapidus A."/>
            <person name="Barry K."/>
            <person name="Detter J.C."/>
            <person name="Glavina del Rio T."/>
            <person name="Hammon N."/>
            <person name="Israni S."/>
            <person name="Dalin E."/>
            <person name="Tice H."/>
            <person name="Pitluck S."/>
            <person name="Chain P."/>
            <person name="Malfatti S."/>
            <person name="Shin M."/>
            <person name="Vergez L."/>
            <person name="Schmutz J."/>
            <person name="Larimer F."/>
            <person name="Land M."/>
            <person name="Hauser L."/>
            <person name="Richardson P."/>
        </authorList>
    </citation>
    <scope>NUCLEOTIDE SEQUENCE [LARGE SCALE GENOMIC DNA]</scope>
    <source>
        <strain>ATCC 25017 / CCUG 19701 / FSC 153 / O#319-036</strain>
    </source>
</reference>
<keyword id="KW-0997">Cell inner membrane</keyword>
<keyword id="KW-1003">Cell membrane</keyword>
<keyword id="KW-0472">Membrane</keyword>
<keyword id="KW-0520">NAD</keyword>
<keyword id="KW-0874">Quinone</keyword>
<keyword id="KW-1278">Translocase</keyword>
<keyword id="KW-0813">Transport</keyword>
<keyword id="KW-0830">Ubiquinone</keyword>
<accession>B0TWP7</accession>